<comment type="function">
    <text evidence="1">Involved in concentration and sorting of cargo proteins of the multivesicular body (MVB) for incorporation into intralumenal vesicles.</text>
</comment>
<comment type="subcellular location">
    <subcellularLocation>
        <location evidence="1">Cytoplasm</location>
    </subcellularLocation>
    <subcellularLocation>
        <location evidence="1">Endosome</location>
    </subcellularLocation>
</comment>
<comment type="similarity">
    <text evidence="5">Belongs to the BRO1 family.</text>
</comment>
<comment type="sequence caution" evidence="5">
    <conflict type="erroneous gene model prediction">
        <sequence resource="EMBL-CDS" id="AAR02857"/>
    </conflict>
</comment>
<comment type="sequence caution" evidence="5">
    <conflict type="erroneous gene model prediction">
        <sequence resource="EMBL-CDS" id="EAA57980"/>
    </conflict>
    <text>The predicted gene AN6194 has been split into 2 genes: AN10778 and AN10788.</text>
</comment>
<dbReference type="EMBL" id="AY219921">
    <property type="protein sequence ID" value="AAR02857.1"/>
    <property type="status" value="ALT_SEQ"/>
    <property type="molecule type" value="Genomic_DNA"/>
</dbReference>
<dbReference type="EMBL" id="AACD01000105">
    <property type="protein sequence ID" value="EAA57980.1"/>
    <property type="status" value="ALT_SEQ"/>
    <property type="molecule type" value="Genomic_DNA"/>
</dbReference>
<dbReference type="EMBL" id="BN001301">
    <property type="protein sequence ID" value="CBF69994.1"/>
    <property type="molecule type" value="Genomic_DNA"/>
</dbReference>
<dbReference type="RefSeq" id="XP_663798.1">
    <property type="nucleotide sequence ID" value="XM_658706.1"/>
</dbReference>
<dbReference type="SMR" id="C8V212"/>
<dbReference type="FunCoup" id="C8V212">
    <property type="interactions" value="80"/>
</dbReference>
<dbReference type="STRING" id="227321.C8V212"/>
<dbReference type="EnsemblFungi" id="CBF69994">
    <property type="protein sequence ID" value="CBF69994"/>
    <property type="gene ID" value="ANIA_10788"/>
</dbReference>
<dbReference type="KEGG" id="ani:ANIA_10788"/>
<dbReference type="VEuPathDB" id="FungiDB:AN10788"/>
<dbReference type="eggNOG" id="KOG2220">
    <property type="taxonomic scope" value="Eukaryota"/>
</dbReference>
<dbReference type="HOGENOM" id="CLU_003661_1_0_1"/>
<dbReference type="InParanoid" id="C8V212"/>
<dbReference type="OMA" id="CHAANQS"/>
<dbReference type="OrthoDB" id="2141925at2759"/>
<dbReference type="Proteomes" id="UP000000560">
    <property type="component" value="Chromosome I"/>
</dbReference>
<dbReference type="GO" id="GO:0005768">
    <property type="term" value="C:endosome"/>
    <property type="evidence" value="ECO:0000318"/>
    <property type="project" value="GO_Central"/>
</dbReference>
<dbReference type="GO" id="GO:0043328">
    <property type="term" value="P:protein transport to vacuole involved in ubiquitin-dependent protein catabolic process via the multivesicular body sorting pathway"/>
    <property type="evidence" value="ECO:0000318"/>
    <property type="project" value="GO_Central"/>
</dbReference>
<dbReference type="CDD" id="cd09242">
    <property type="entry name" value="BRO1_ScBro1_like"/>
    <property type="match status" value="1"/>
</dbReference>
<dbReference type="CDD" id="cd09237">
    <property type="entry name" value="V_ScBro1_like"/>
    <property type="match status" value="1"/>
</dbReference>
<dbReference type="Gene3D" id="1.20.120.560">
    <property type="entry name" value="alix/aip1 in complex with the ypdl late domain"/>
    <property type="match status" value="1"/>
</dbReference>
<dbReference type="Gene3D" id="1.20.140.50">
    <property type="entry name" value="alix/aip1 like domains"/>
    <property type="match status" value="1"/>
</dbReference>
<dbReference type="Gene3D" id="1.25.40.280">
    <property type="entry name" value="alix/aip1 like domains"/>
    <property type="match status" value="1"/>
</dbReference>
<dbReference type="InterPro" id="IPR025304">
    <property type="entry name" value="ALIX_V_dom"/>
</dbReference>
<dbReference type="InterPro" id="IPR004328">
    <property type="entry name" value="BRO1_dom"/>
</dbReference>
<dbReference type="InterPro" id="IPR038499">
    <property type="entry name" value="BRO1_sf"/>
</dbReference>
<dbReference type="PANTHER" id="PTHR23030">
    <property type="entry name" value="PCD6 INTERACTING PROTEIN-RELATED"/>
    <property type="match status" value="1"/>
</dbReference>
<dbReference type="PANTHER" id="PTHR23030:SF30">
    <property type="entry name" value="TYROSINE-PROTEIN PHOSPHATASE NON-RECEPTOR TYPE 23"/>
    <property type="match status" value="1"/>
</dbReference>
<dbReference type="Pfam" id="PF13949">
    <property type="entry name" value="ALIX_LYPXL_bnd"/>
    <property type="match status" value="1"/>
</dbReference>
<dbReference type="Pfam" id="PF03097">
    <property type="entry name" value="BRO1"/>
    <property type="match status" value="1"/>
</dbReference>
<dbReference type="PRINTS" id="PR01217">
    <property type="entry name" value="PRICHEXTENSN"/>
</dbReference>
<dbReference type="SMART" id="SM01041">
    <property type="entry name" value="BRO1"/>
    <property type="match status" value="1"/>
</dbReference>
<dbReference type="PROSITE" id="PS51180">
    <property type="entry name" value="BRO1"/>
    <property type="match status" value="1"/>
</dbReference>
<protein>
    <recommendedName>
        <fullName>Vacuolar protein-sorting protein bro1</fullName>
    </recommendedName>
    <alternativeName>
        <fullName>BRO domain-containing protein 1</fullName>
    </alternativeName>
</protein>
<organism>
    <name type="scientific">Emericella nidulans (strain FGSC A4 / ATCC 38163 / CBS 112.46 / NRRL 194 / M139)</name>
    <name type="common">Aspergillus nidulans</name>
    <dbReference type="NCBI Taxonomy" id="227321"/>
    <lineage>
        <taxon>Eukaryota</taxon>
        <taxon>Fungi</taxon>
        <taxon>Dikarya</taxon>
        <taxon>Ascomycota</taxon>
        <taxon>Pezizomycotina</taxon>
        <taxon>Eurotiomycetes</taxon>
        <taxon>Eurotiomycetidae</taxon>
        <taxon>Eurotiales</taxon>
        <taxon>Aspergillaceae</taxon>
        <taxon>Aspergillus</taxon>
        <taxon>Aspergillus subgen. Nidulantes</taxon>
    </lineage>
</organism>
<keyword id="KW-0175">Coiled coil</keyword>
<keyword id="KW-0963">Cytoplasm</keyword>
<keyword id="KW-0967">Endosome</keyword>
<keyword id="KW-0653">Protein transport</keyword>
<keyword id="KW-1185">Reference proteome</keyword>
<keyword id="KW-0813">Transport</keyword>
<reference key="1">
    <citation type="journal article" date="1991" name="Mol. Cell. Biol.">
        <title>Analysis of the creA gene, a regulator of carbon catabolite repression in Aspergillus nidulans.</title>
        <authorList>
            <person name="Dowzer C.E.A."/>
            <person name="Kelly J.M."/>
        </authorList>
    </citation>
    <scope>NUCLEOTIDE SEQUENCE [GENOMIC DNA]</scope>
    <source>
        <strain>biA1 niiA4</strain>
    </source>
</reference>
<reference key="2">
    <citation type="journal article" date="2005" name="Nature">
        <title>Sequencing of Aspergillus nidulans and comparative analysis with A. fumigatus and A. oryzae.</title>
        <authorList>
            <person name="Galagan J.E."/>
            <person name="Calvo S.E."/>
            <person name="Cuomo C."/>
            <person name="Ma L.-J."/>
            <person name="Wortman J.R."/>
            <person name="Batzoglou S."/>
            <person name="Lee S.-I."/>
            <person name="Bastuerkmen M."/>
            <person name="Spevak C.C."/>
            <person name="Clutterbuck J."/>
            <person name="Kapitonov V."/>
            <person name="Jurka J."/>
            <person name="Scazzocchio C."/>
            <person name="Farman M.L."/>
            <person name="Butler J."/>
            <person name="Purcell S."/>
            <person name="Harris S."/>
            <person name="Braus G.H."/>
            <person name="Draht O."/>
            <person name="Busch S."/>
            <person name="D'Enfert C."/>
            <person name="Bouchier C."/>
            <person name="Goldman G.H."/>
            <person name="Bell-Pedersen D."/>
            <person name="Griffiths-Jones S."/>
            <person name="Doonan J.H."/>
            <person name="Yu J."/>
            <person name="Vienken K."/>
            <person name="Pain A."/>
            <person name="Freitag M."/>
            <person name="Selker E.U."/>
            <person name="Archer D.B."/>
            <person name="Penalva M.A."/>
            <person name="Oakley B.R."/>
            <person name="Momany M."/>
            <person name="Tanaka T."/>
            <person name="Kumagai T."/>
            <person name="Asai K."/>
            <person name="Machida M."/>
            <person name="Nierman W.C."/>
            <person name="Denning D.W."/>
            <person name="Caddick M.X."/>
            <person name="Hynes M."/>
            <person name="Paoletti M."/>
            <person name="Fischer R."/>
            <person name="Miller B.L."/>
            <person name="Dyer P.S."/>
            <person name="Sachs M.S."/>
            <person name="Osmani S.A."/>
            <person name="Birren B.W."/>
        </authorList>
    </citation>
    <scope>NUCLEOTIDE SEQUENCE [LARGE SCALE GENOMIC DNA]</scope>
    <source>
        <strain>FGSC A4 / ATCC 38163 / CBS 112.46 / NRRL 194 / M139</strain>
    </source>
</reference>
<reference key="3">
    <citation type="journal article" date="2009" name="Fungal Genet. Biol.">
        <title>The 2008 update of the Aspergillus nidulans genome annotation: a community effort.</title>
        <authorList>
            <person name="Wortman J.R."/>
            <person name="Gilsenan J.M."/>
            <person name="Joardar V."/>
            <person name="Deegan J."/>
            <person name="Clutterbuck J."/>
            <person name="Andersen M.R."/>
            <person name="Archer D."/>
            <person name="Bencina M."/>
            <person name="Braus G."/>
            <person name="Coutinho P."/>
            <person name="von Dohren H."/>
            <person name="Doonan J."/>
            <person name="Driessen A.J."/>
            <person name="Durek P."/>
            <person name="Espeso E."/>
            <person name="Fekete E."/>
            <person name="Flipphi M."/>
            <person name="Estrada C.G."/>
            <person name="Geysens S."/>
            <person name="Goldman G."/>
            <person name="de Groot P.W."/>
            <person name="Hansen K."/>
            <person name="Harris S.D."/>
            <person name="Heinekamp T."/>
            <person name="Helmstaedt K."/>
            <person name="Henrissat B."/>
            <person name="Hofmann G."/>
            <person name="Homan T."/>
            <person name="Horio T."/>
            <person name="Horiuchi H."/>
            <person name="James S."/>
            <person name="Jones M."/>
            <person name="Karaffa L."/>
            <person name="Karanyi Z."/>
            <person name="Kato M."/>
            <person name="Keller N."/>
            <person name="Kelly D.E."/>
            <person name="Kiel J.A."/>
            <person name="Kim J.M."/>
            <person name="van der Klei I.J."/>
            <person name="Klis F.M."/>
            <person name="Kovalchuk A."/>
            <person name="Krasevec N."/>
            <person name="Kubicek C.P."/>
            <person name="Liu B."/>
            <person name="Maccabe A."/>
            <person name="Meyer V."/>
            <person name="Mirabito P."/>
            <person name="Miskei M."/>
            <person name="Mos M."/>
            <person name="Mullins J."/>
            <person name="Nelson D.R."/>
            <person name="Nielsen J."/>
            <person name="Oakley B.R."/>
            <person name="Osmani S.A."/>
            <person name="Pakula T."/>
            <person name="Paszewski A."/>
            <person name="Paulsen I."/>
            <person name="Pilsyk S."/>
            <person name="Pocsi I."/>
            <person name="Punt P.J."/>
            <person name="Ram A.F."/>
            <person name="Ren Q."/>
            <person name="Robellet X."/>
            <person name="Robson G."/>
            <person name="Seiboth B."/>
            <person name="van Solingen P."/>
            <person name="Specht T."/>
            <person name="Sun J."/>
            <person name="Taheri-Talesh N."/>
            <person name="Takeshita N."/>
            <person name="Ussery D."/>
            <person name="vanKuyk P.A."/>
            <person name="Visser H."/>
            <person name="van de Vondervoort P.J."/>
            <person name="de Vries R.P."/>
            <person name="Walton J."/>
            <person name="Xiang X."/>
            <person name="Xiong Y."/>
            <person name="Zeng A.P."/>
            <person name="Brandt B.W."/>
            <person name="Cornell M.J."/>
            <person name="van den Hondel C.A."/>
            <person name="Visser J."/>
            <person name="Oliver S.G."/>
            <person name="Turner G."/>
        </authorList>
    </citation>
    <scope>GENOME REANNOTATION</scope>
    <source>
        <strain>FGSC A4 / ATCC 38163 / CBS 112.46 / NRRL 194 / M139</strain>
    </source>
</reference>
<feature type="chain" id="PRO_0000218865" description="Vacuolar protein-sorting protein bro1">
    <location>
        <begin position="1"/>
        <end position="1000"/>
    </location>
</feature>
<feature type="domain" description="BRO1" evidence="3">
    <location>
        <begin position="5"/>
        <end position="406"/>
    </location>
</feature>
<feature type="region of interest" description="Disordered" evidence="4">
    <location>
        <begin position="760"/>
        <end position="857"/>
    </location>
</feature>
<feature type="region of interest" description="Disordered" evidence="4">
    <location>
        <begin position="891"/>
        <end position="1000"/>
    </location>
</feature>
<feature type="coiled-coil region" evidence="2">
    <location>
        <begin position="732"/>
        <end position="793"/>
    </location>
</feature>
<feature type="compositionally biased region" description="Basic and acidic residues" evidence="4">
    <location>
        <begin position="764"/>
        <end position="792"/>
    </location>
</feature>
<feature type="compositionally biased region" description="Polar residues" evidence="4">
    <location>
        <begin position="840"/>
        <end position="849"/>
    </location>
</feature>
<feature type="compositionally biased region" description="Pro residues" evidence="4">
    <location>
        <begin position="898"/>
        <end position="922"/>
    </location>
</feature>
<feature type="compositionally biased region" description="Pro residues" evidence="4">
    <location>
        <begin position="931"/>
        <end position="954"/>
    </location>
</feature>
<feature type="compositionally biased region" description="Polar residues" evidence="4">
    <location>
        <begin position="981"/>
        <end position="991"/>
    </location>
</feature>
<feature type="sequence conflict" description="In Ref. 1; AAR02857." evidence="5" ref="1">
    <original>A</original>
    <variation>T</variation>
    <location>
        <position position="262"/>
    </location>
</feature>
<feature type="sequence conflict" description="In Ref. 1; AAR02857." evidence="5" ref="1">
    <original>D</original>
    <variation>N</variation>
    <location>
        <position position="303"/>
    </location>
</feature>
<proteinExistence type="inferred from homology"/>
<name>BRO1_EMENI</name>
<sequence length="1000" mass="110592">MVQSPMISCPLKQTNEIDWIQPLKDYIRQSYGEDPERYSQECATLNRLRQDMRGAGKDSATGRDLLYRYYGQLELLDLRFPVDENHIKISFTWYDAFTHKPTSQYSLAFEKASIIFNISAVLSCHAANQNRADDIGLKTAYHNFQASAGMFTYINENFLHAPSTDLNRETVKTLINITLAQGQEVFLEKQIMDHKKAGFLAKLASQASYLYAQAIEGTQEHAKGIFDKSWVTLLQVKSAHMGSVASYYQALADGESGSHGVAVARLQLAEKHSTSALSWAKSLPSSISPNTNLTSEAGPSLVDIVKFHLANVQSQLATFVKDNDFIYHQPVPSEAGLSAVSKLPAAKAIPVSELYQGQDIQRIIGPDIFQKLVPMSVTETASLYDEEKAKLIRAETEKVETADGEMAASLDYFKLPGSLNILKGGMDQEVMVDEEFQRWCQELAGHDSFAKAFDTLQDRKSEVLATLDQCAKQLDLEESVCEKMRSKYGADWSQQPSSRLNMTLRNDIRTYRDTVHEASASDAQLSATLRQYESDFDEMRSAGETDEADVLFQRAMIKAGSKQGKTKNGVTSPYSATEGSLLDDVYDDGVPSVAEQIARVESILKKLNLVKRERTQVLKDLKEKVRNDDISNVLILNKKSITGQESQLFEAELEKFHPHQMRIVQANHKQTALMKELTKTYGDLLQDKRVRAEQSKYESITRQRNSVMARYKKIYDSFNNLGSGIKQAQTFYAEMTETVDSLKKNVDTFINNRRSEGAQLLGQIEREKAAGTSDHEEREREKLRQLMERLSTEPKPPSVPPGSSTAGPAKAKSPPPPVKAPAYPTNIAPPKASPHFAPTVPQQHGTPVSHSPAPYSQYVPPGAGVSYLPSQSFQQGAAAPLSEGYNPMAYPIPASSMSPPPSQPFYSPTPTPFYTSPTPPVPSGQYMPQGYVPPPPPPRPQQPTYPPSTGPFPSGPGGYAQSRPYGSSQHHKAHSQSSPQTGPSVSANSSDPWAGLNAWK</sequence>
<accession>C8V212</accession>
<accession>Q5AZT6</accession>
<accession>Q6XPR4</accession>
<evidence type="ECO:0000250" key="1"/>
<evidence type="ECO:0000255" key="2"/>
<evidence type="ECO:0000255" key="3">
    <source>
        <dbReference type="PROSITE-ProRule" id="PRU00526"/>
    </source>
</evidence>
<evidence type="ECO:0000256" key="4">
    <source>
        <dbReference type="SAM" id="MobiDB-lite"/>
    </source>
</evidence>
<evidence type="ECO:0000305" key="5"/>
<gene>
    <name type="primary">broA</name>
    <name type="synonym">bro1</name>
    <name type="ORF">AN10788</name>
</gene>